<sequence length="385" mass="39756">MRLDQRWLIARVIMRSAIGFFASFTVSSGVLAANVLADPADDALAKLNELSRQAEQTTEALHSAQLDLNEKLAAQRAADQKLADNRTALDAARARLATFQTAVNKVAAATYMGGRTHGMDAILTAESPQLLIDRLSVQRVMAHQMSTQMARFKAAGEQAVKAEQAAAKSAADARSAAEQAAAVRANLQHKQSQLQVQIAVVKSQYVALTPEERTALADPGPVPAVAAIAPGAPPAALPPGAPPGDGPAPGVAPPPGGMPGLPFVQPDGAGGDRTAVVQAALTQVGAPYAWGGAAPGGFDCSGLVMWAFQQAGIALPHSSQALAHGGQPVALSDLQPGDVLTFYSDASHAGIYIGDGLMVHSSTYGVPVRVVPMDSSGPIYDARRY</sequence>
<organism>
    <name type="scientific">Mycobacterium tuberculosis (strain CDC 1551 / Oshkosh)</name>
    <dbReference type="NCBI Taxonomy" id="83331"/>
    <lineage>
        <taxon>Bacteria</taxon>
        <taxon>Bacillati</taxon>
        <taxon>Actinomycetota</taxon>
        <taxon>Actinomycetes</taxon>
        <taxon>Mycobacteriales</taxon>
        <taxon>Mycobacteriaceae</taxon>
        <taxon>Mycobacterium</taxon>
        <taxon>Mycobacterium tuberculosis complex</taxon>
    </lineage>
</organism>
<dbReference type="EC" id="3.4.-.-"/>
<dbReference type="EMBL" id="AE000516">
    <property type="protein sequence ID" value="AAK46531.1"/>
    <property type="status" value="ALT_INIT"/>
    <property type="molecule type" value="Genomic_DNA"/>
</dbReference>
<dbReference type="PIR" id="H70937">
    <property type="entry name" value="H70937"/>
</dbReference>
<dbReference type="EMDB" id="EMD-35364"/>
<dbReference type="EMDB" id="EMD-35437"/>
<dbReference type="EMDB" id="EMD-36304"/>
<dbReference type="SMR" id="P9WHU2"/>
<dbReference type="KEGG" id="mtc:MT2245"/>
<dbReference type="PATRIC" id="fig|83331.31.peg.2421"/>
<dbReference type="HOGENOM" id="CLU_034085_1_1_11"/>
<dbReference type="Proteomes" id="UP000001020">
    <property type="component" value="Chromosome"/>
</dbReference>
<dbReference type="GO" id="GO:0008234">
    <property type="term" value="F:cysteine-type peptidase activity"/>
    <property type="evidence" value="ECO:0007669"/>
    <property type="project" value="UniProtKB-KW"/>
</dbReference>
<dbReference type="GO" id="GO:0006508">
    <property type="term" value="P:proteolysis"/>
    <property type="evidence" value="ECO:0007669"/>
    <property type="project" value="UniProtKB-KW"/>
</dbReference>
<dbReference type="Gene3D" id="6.10.250.3150">
    <property type="match status" value="1"/>
</dbReference>
<dbReference type="Gene3D" id="3.90.1720.10">
    <property type="entry name" value="endopeptidase domain like (from Nostoc punctiforme)"/>
    <property type="match status" value="1"/>
</dbReference>
<dbReference type="InterPro" id="IPR000064">
    <property type="entry name" value="NLP_P60_dom"/>
</dbReference>
<dbReference type="InterPro" id="IPR038765">
    <property type="entry name" value="Papain-like_cys_pep_sf"/>
</dbReference>
<dbReference type="InterPro" id="IPR051794">
    <property type="entry name" value="PG_Endopeptidase_C40"/>
</dbReference>
<dbReference type="NCBIfam" id="NF038345">
    <property type="entry name" value="wall_hydro_RipC"/>
    <property type="match status" value="1"/>
</dbReference>
<dbReference type="PANTHER" id="PTHR47359:SF3">
    <property type="entry name" value="NLP_P60 DOMAIN-CONTAINING PROTEIN-RELATED"/>
    <property type="match status" value="1"/>
</dbReference>
<dbReference type="PANTHER" id="PTHR47359">
    <property type="entry name" value="PEPTIDOGLYCAN DL-ENDOPEPTIDASE CWLO"/>
    <property type="match status" value="1"/>
</dbReference>
<dbReference type="Pfam" id="PF00877">
    <property type="entry name" value="NLPC_P60"/>
    <property type="match status" value="1"/>
</dbReference>
<dbReference type="SUPFAM" id="SSF54001">
    <property type="entry name" value="Cysteine proteinases"/>
    <property type="match status" value="1"/>
</dbReference>
<dbReference type="PROSITE" id="PS51935">
    <property type="entry name" value="NLPC_P60"/>
    <property type="match status" value="1"/>
</dbReference>
<feature type="chain" id="PRO_0000428122" description="Probable endopeptidase MT2245">
    <location>
        <begin position="1"/>
        <end position="385"/>
    </location>
</feature>
<feature type="domain" description="NlpC/P60" evidence="1">
    <location>
        <begin position="270"/>
        <end position="385"/>
    </location>
</feature>
<feature type="region of interest" description="Disordered" evidence="2">
    <location>
        <begin position="235"/>
        <end position="268"/>
    </location>
</feature>
<feature type="compositionally biased region" description="Pro residues" evidence="2">
    <location>
        <begin position="235"/>
        <end position="257"/>
    </location>
</feature>
<feature type="active site" description="Nucleophile" evidence="1">
    <location>
        <position position="300"/>
    </location>
</feature>
<feature type="active site" description="Proton acceptor" evidence="1">
    <location>
        <position position="348"/>
    </location>
</feature>
<feature type="active site" evidence="1">
    <location>
        <position position="360"/>
    </location>
</feature>
<keyword id="KW-0378">Hydrolase</keyword>
<keyword id="KW-0645">Protease</keyword>
<keyword id="KW-1185">Reference proteome</keyword>
<keyword id="KW-0788">Thiol protease</keyword>
<gene>
    <name type="ordered locus">MT2245</name>
</gene>
<proteinExistence type="inferred from homology"/>
<comment type="similarity">
    <text evidence="1 3">Belongs to the peptidase C40 family.</text>
</comment>
<comment type="sequence caution" evidence="3">
    <conflict type="erroneous initiation">
        <sequence resource="EMBL-CDS" id="AAK46531"/>
    </conflict>
</comment>
<accession>P9WHU2</accession>
<accession>L0TBK4</accession>
<accession>O53524</accession>
<accession>P67473</accession>
<accession>Q10383</accession>
<name>Y2190_MYCTO</name>
<evidence type="ECO:0000255" key="1">
    <source>
        <dbReference type="PROSITE-ProRule" id="PRU01284"/>
    </source>
</evidence>
<evidence type="ECO:0000256" key="2">
    <source>
        <dbReference type="SAM" id="MobiDB-lite"/>
    </source>
</evidence>
<evidence type="ECO:0000305" key="3"/>
<protein>
    <recommendedName>
        <fullName>Probable endopeptidase MT2245</fullName>
        <ecNumber>3.4.-.-</ecNumber>
    </recommendedName>
</protein>
<reference key="1">
    <citation type="journal article" date="2002" name="J. Bacteriol.">
        <title>Whole-genome comparison of Mycobacterium tuberculosis clinical and laboratory strains.</title>
        <authorList>
            <person name="Fleischmann R.D."/>
            <person name="Alland D."/>
            <person name="Eisen J.A."/>
            <person name="Carpenter L."/>
            <person name="White O."/>
            <person name="Peterson J.D."/>
            <person name="DeBoy R.T."/>
            <person name="Dodson R.J."/>
            <person name="Gwinn M.L."/>
            <person name="Haft D.H."/>
            <person name="Hickey E.K."/>
            <person name="Kolonay J.F."/>
            <person name="Nelson W.C."/>
            <person name="Umayam L.A."/>
            <person name="Ermolaeva M.D."/>
            <person name="Salzberg S.L."/>
            <person name="Delcher A."/>
            <person name="Utterback T.R."/>
            <person name="Weidman J.F."/>
            <person name="Khouri H.M."/>
            <person name="Gill J."/>
            <person name="Mikula A."/>
            <person name="Bishai W."/>
            <person name="Jacobs W.R. Jr."/>
            <person name="Venter J.C."/>
            <person name="Fraser C.M."/>
        </authorList>
    </citation>
    <scope>NUCLEOTIDE SEQUENCE [LARGE SCALE GENOMIC DNA]</scope>
    <source>
        <strain>CDC 1551 / Oshkosh</strain>
    </source>
</reference>